<name>RECA_CHLTB</name>
<dbReference type="EMBL" id="AM884177">
    <property type="protein sequence ID" value="CAP06416.1"/>
    <property type="molecule type" value="Genomic_DNA"/>
</dbReference>
<dbReference type="RefSeq" id="WP_009872817.1">
    <property type="nucleotide sequence ID" value="NC_010280.2"/>
</dbReference>
<dbReference type="SMR" id="B0BAA4"/>
<dbReference type="KEGG" id="ctl:CTLon_0018"/>
<dbReference type="HOGENOM" id="CLU_040469_3_2_0"/>
<dbReference type="Proteomes" id="UP001154401">
    <property type="component" value="Chromosome"/>
</dbReference>
<dbReference type="GO" id="GO:0005829">
    <property type="term" value="C:cytosol"/>
    <property type="evidence" value="ECO:0007669"/>
    <property type="project" value="TreeGrafter"/>
</dbReference>
<dbReference type="GO" id="GO:0005524">
    <property type="term" value="F:ATP binding"/>
    <property type="evidence" value="ECO:0007669"/>
    <property type="project" value="UniProtKB-UniRule"/>
</dbReference>
<dbReference type="GO" id="GO:0016887">
    <property type="term" value="F:ATP hydrolysis activity"/>
    <property type="evidence" value="ECO:0007669"/>
    <property type="project" value="InterPro"/>
</dbReference>
<dbReference type="GO" id="GO:0140664">
    <property type="term" value="F:ATP-dependent DNA damage sensor activity"/>
    <property type="evidence" value="ECO:0007669"/>
    <property type="project" value="InterPro"/>
</dbReference>
<dbReference type="GO" id="GO:0003684">
    <property type="term" value="F:damaged DNA binding"/>
    <property type="evidence" value="ECO:0007669"/>
    <property type="project" value="UniProtKB-UniRule"/>
</dbReference>
<dbReference type="GO" id="GO:0003697">
    <property type="term" value="F:single-stranded DNA binding"/>
    <property type="evidence" value="ECO:0007669"/>
    <property type="project" value="UniProtKB-UniRule"/>
</dbReference>
<dbReference type="GO" id="GO:0006310">
    <property type="term" value="P:DNA recombination"/>
    <property type="evidence" value="ECO:0007669"/>
    <property type="project" value="UniProtKB-UniRule"/>
</dbReference>
<dbReference type="GO" id="GO:0006281">
    <property type="term" value="P:DNA repair"/>
    <property type="evidence" value="ECO:0007669"/>
    <property type="project" value="UniProtKB-UniRule"/>
</dbReference>
<dbReference type="GO" id="GO:0009432">
    <property type="term" value="P:SOS response"/>
    <property type="evidence" value="ECO:0007669"/>
    <property type="project" value="UniProtKB-UniRule"/>
</dbReference>
<dbReference type="CDD" id="cd00983">
    <property type="entry name" value="RecA"/>
    <property type="match status" value="1"/>
</dbReference>
<dbReference type="FunFam" id="3.40.50.300:FF:000087">
    <property type="entry name" value="Recombinase RecA"/>
    <property type="match status" value="1"/>
</dbReference>
<dbReference type="Gene3D" id="3.40.50.300">
    <property type="entry name" value="P-loop containing nucleotide triphosphate hydrolases"/>
    <property type="match status" value="1"/>
</dbReference>
<dbReference type="HAMAP" id="MF_00268">
    <property type="entry name" value="RecA"/>
    <property type="match status" value="1"/>
</dbReference>
<dbReference type="InterPro" id="IPR003593">
    <property type="entry name" value="AAA+_ATPase"/>
</dbReference>
<dbReference type="InterPro" id="IPR013765">
    <property type="entry name" value="DNA_recomb/repair_RecA"/>
</dbReference>
<dbReference type="InterPro" id="IPR020584">
    <property type="entry name" value="DNA_recomb/repair_RecA_CS"/>
</dbReference>
<dbReference type="InterPro" id="IPR027417">
    <property type="entry name" value="P-loop_NTPase"/>
</dbReference>
<dbReference type="InterPro" id="IPR049261">
    <property type="entry name" value="RecA-like_C"/>
</dbReference>
<dbReference type="InterPro" id="IPR049428">
    <property type="entry name" value="RecA-like_N"/>
</dbReference>
<dbReference type="InterPro" id="IPR020588">
    <property type="entry name" value="RecA_ATP-bd"/>
</dbReference>
<dbReference type="InterPro" id="IPR023400">
    <property type="entry name" value="RecA_C_sf"/>
</dbReference>
<dbReference type="InterPro" id="IPR020587">
    <property type="entry name" value="RecA_monomer-monomer_interface"/>
</dbReference>
<dbReference type="NCBIfam" id="TIGR02012">
    <property type="entry name" value="tigrfam_recA"/>
    <property type="match status" value="1"/>
</dbReference>
<dbReference type="PANTHER" id="PTHR45900:SF1">
    <property type="entry name" value="MITOCHONDRIAL DNA REPAIR PROTEIN RECA HOMOLOG-RELATED"/>
    <property type="match status" value="1"/>
</dbReference>
<dbReference type="PANTHER" id="PTHR45900">
    <property type="entry name" value="RECA"/>
    <property type="match status" value="1"/>
</dbReference>
<dbReference type="Pfam" id="PF00154">
    <property type="entry name" value="RecA"/>
    <property type="match status" value="1"/>
</dbReference>
<dbReference type="Pfam" id="PF21096">
    <property type="entry name" value="RecA_C"/>
    <property type="match status" value="1"/>
</dbReference>
<dbReference type="PRINTS" id="PR00142">
    <property type="entry name" value="RECA"/>
</dbReference>
<dbReference type="SMART" id="SM00382">
    <property type="entry name" value="AAA"/>
    <property type="match status" value="1"/>
</dbReference>
<dbReference type="SUPFAM" id="SSF52540">
    <property type="entry name" value="P-loop containing nucleoside triphosphate hydrolases"/>
    <property type="match status" value="1"/>
</dbReference>
<dbReference type="SUPFAM" id="SSF54752">
    <property type="entry name" value="RecA protein, C-terminal domain"/>
    <property type="match status" value="1"/>
</dbReference>
<dbReference type="PROSITE" id="PS00321">
    <property type="entry name" value="RECA_1"/>
    <property type="match status" value="1"/>
</dbReference>
<dbReference type="PROSITE" id="PS50162">
    <property type="entry name" value="RECA_2"/>
    <property type="match status" value="1"/>
</dbReference>
<dbReference type="PROSITE" id="PS50163">
    <property type="entry name" value="RECA_3"/>
    <property type="match status" value="1"/>
</dbReference>
<reference key="1">
    <citation type="journal article" date="2008" name="Genome Res.">
        <title>Chlamydia trachomatis: genome sequence analysis of lymphogranuloma venereum isolates.</title>
        <authorList>
            <person name="Thomson N.R."/>
            <person name="Holden M.T.G."/>
            <person name="Carder C."/>
            <person name="Lennard N."/>
            <person name="Lockey S.J."/>
            <person name="Marsh P."/>
            <person name="Skipp P."/>
            <person name="O'Connor C.D."/>
            <person name="Goodhead I."/>
            <person name="Norbertzcak H."/>
            <person name="Harris B."/>
            <person name="Ormond D."/>
            <person name="Rance R."/>
            <person name="Quail M.A."/>
            <person name="Parkhill J."/>
            <person name="Stephens R.S."/>
            <person name="Clarke I.N."/>
        </authorList>
    </citation>
    <scope>NUCLEOTIDE SEQUENCE [LARGE SCALE GENOMIC DNA]</scope>
    <source>
        <strain>UCH-1/proctitis</strain>
    </source>
</reference>
<evidence type="ECO:0000255" key="1">
    <source>
        <dbReference type="HAMAP-Rule" id="MF_00268"/>
    </source>
</evidence>
<proteinExistence type="inferred from homology"/>
<sequence>MSVPDRKRALEAAIAYIEKQFGAGSIMSLGKHSSAHEISTIKTGALSLDLALGIGGVPKGRIVEIFGPESSGKTTLATHIVANAQKMGGVAAYIDAEHALDPNYAALIGANINDLMISQPDCGEDALSIAELLARSGAVDVIVIDSVAALVPKSELEGEIGDVHVGLQARMMSQALRKLTATLARTNTCAIFINQIREKIGVSFGNPETTTGGRALKFYSSIRIDIRRIGSIKGGENFDIGNRIKVKVAKNKLAPPFRTAEFDILFNEGISSAGCIIDLAVEKNIIDKKGSWFNYQDRKLGQGREAVREELKRNKELFHELERRIYESVQASQAPAAACVDSESREVAEAAK</sequence>
<organism>
    <name type="scientific">Chlamydia trachomatis serovar L2b (strain UCH-1/proctitis)</name>
    <dbReference type="NCBI Taxonomy" id="471473"/>
    <lineage>
        <taxon>Bacteria</taxon>
        <taxon>Pseudomonadati</taxon>
        <taxon>Chlamydiota</taxon>
        <taxon>Chlamydiia</taxon>
        <taxon>Chlamydiales</taxon>
        <taxon>Chlamydiaceae</taxon>
        <taxon>Chlamydia/Chlamydophila group</taxon>
        <taxon>Chlamydia</taxon>
    </lineage>
</organism>
<accession>B0BAA4</accession>
<gene>
    <name evidence="1" type="primary">recA</name>
    <name type="ordered locus">CTLon_0018</name>
</gene>
<keyword id="KW-0067">ATP-binding</keyword>
<keyword id="KW-0963">Cytoplasm</keyword>
<keyword id="KW-0227">DNA damage</keyword>
<keyword id="KW-0233">DNA recombination</keyword>
<keyword id="KW-0234">DNA repair</keyword>
<keyword id="KW-0238">DNA-binding</keyword>
<keyword id="KW-0547">Nucleotide-binding</keyword>
<keyword id="KW-0742">SOS response</keyword>
<feature type="chain" id="PRO_1000114324" description="Protein RecA">
    <location>
        <begin position="1"/>
        <end position="352"/>
    </location>
</feature>
<feature type="binding site" evidence="1">
    <location>
        <begin position="67"/>
        <end position="74"/>
    </location>
    <ligand>
        <name>ATP</name>
        <dbReference type="ChEBI" id="CHEBI:30616"/>
    </ligand>
</feature>
<comment type="function">
    <text evidence="1">Can catalyze the hydrolysis of ATP in the presence of single-stranded DNA, the ATP-dependent uptake of single-stranded DNA by duplex DNA, and the ATP-dependent hybridization of homologous single-stranded DNAs. It interacts with LexA causing its activation and leading to its autocatalytic cleavage.</text>
</comment>
<comment type="subcellular location">
    <subcellularLocation>
        <location evidence="1">Cytoplasm</location>
    </subcellularLocation>
</comment>
<comment type="similarity">
    <text evidence="1">Belongs to the RecA family.</text>
</comment>
<protein>
    <recommendedName>
        <fullName evidence="1">Protein RecA</fullName>
    </recommendedName>
    <alternativeName>
        <fullName evidence="1">Recombinase A</fullName>
    </alternativeName>
</protein>